<gene>
    <name type="ordered locus">Amet_2288</name>
</gene>
<feature type="chain" id="PRO_1000081707" description="dTTP/UTP pyrophosphatase">
    <location>
        <begin position="1"/>
        <end position="192"/>
    </location>
</feature>
<feature type="active site" description="Proton acceptor" evidence="1">
    <location>
        <position position="70"/>
    </location>
</feature>
<feature type="site" description="Important for substrate specificity" evidence="1">
    <location>
        <position position="12"/>
    </location>
</feature>
<feature type="site" description="Important for substrate specificity" evidence="1">
    <location>
        <position position="71"/>
    </location>
</feature>
<feature type="site" description="Important for substrate specificity" evidence="1">
    <location>
        <position position="154"/>
    </location>
</feature>
<name>NTPPA_ALKMQ</name>
<accession>A6TQH7</accession>
<reference key="1">
    <citation type="journal article" date="2016" name="Genome Announc.">
        <title>Complete genome sequence of Alkaliphilus metalliredigens strain QYMF, an alkaliphilic and metal-reducing bacterium isolated from borax-contaminated leachate ponds.</title>
        <authorList>
            <person name="Hwang C."/>
            <person name="Copeland A."/>
            <person name="Lucas S."/>
            <person name="Lapidus A."/>
            <person name="Barry K."/>
            <person name="Detter J.C."/>
            <person name="Glavina Del Rio T."/>
            <person name="Hammon N."/>
            <person name="Israni S."/>
            <person name="Dalin E."/>
            <person name="Tice H."/>
            <person name="Pitluck S."/>
            <person name="Chertkov O."/>
            <person name="Brettin T."/>
            <person name="Bruce D."/>
            <person name="Han C."/>
            <person name="Schmutz J."/>
            <person name="Larimer F."/>
            <person name="Land M.L."/>
            <person name="Hauser L."/>
            <person name="Kyrpides N."/>
            <person name="Mikhailova N."/>
            <person name="Ye Q."/>
            <person name="Zhou J."/>
            <person name="Richardson P."/>
            <person name="Fields M.W."/>
        </authorList>
    </citation>
    <scope>NUCLEOTIDE SEQUENCE [LARGE SCALE GENOMIC DNA]</scope>
    <source>
        <strain>QYMF</strain>
    </source>
</reference>
<sequence length="192" mass="21432">MERLILASNSPRRKEILQNLHVKFDIIVSDVDEVFNEKDHPAKIVETLAYLKAEDVANRIDRDAIIIGADTIVVKNGIIGKPKNKQDARDILRTLSGDVHEVITGIVVLDTSSGYTVIDHVVTEVYMKKITDEEIERYIATGEPMDKAGAYGIQGRAAVFVEKIVGDYYNVVGLPICKLGEVLHKHFHINLL</sequence>
<evidence type="ECO:0000255" key="1">
    <source>
        <dbReference type="HAMAP-Rule" id="MF_00528"/>
    </source>
</evidence>
<protein>
    <recommendedName>
        <fullName evidence="1">dTTP/UTP pyrophosphatase</fullName>
        <shortName evidence="1">dTTPase/UTPase</shortName>
        <ecNumber evidence="1">3.6.1.9</ecNumber>
    </recommendedName>
    <alternativeName>
        <fullName evidence="1">Nucleoside triphosphate pyrophosphatase</fullName>
    </alternativeName>
    <alternativeName>
        <fullName evidence="1">Nucleotide pyrophosphatase</fullName>
        <shortName evidence="1">Nucleotide PPase</shortName>
    </alternativeName>
</protein>
<dbReference type="EC" id="3.6.1.9" evidence="1"/>
<dbReference type="EMBL" id="CP000724">
    <property type="protein sequence ID" value="ABR48445.1"/>
    <property type="molecule type" value="Genomic_DNA"/>
</dbReference>
<dbReference type="RefSeq" id="WP_012063420.1">
    <property type="nucleotide sequence ID" value="NC_009633.1"/>
</dbReference>
<dbReference type="SMR" id="A6TQH7"/>
<dbReference type="STRING" id="293826.Amet_2288"/>
<dbReference type="KEGG" id="amt:Amet_2288"/>
<dbReference type="eggNOG" id="COG0424">
    <property type="taxonomic scope" value="Bacteria"/>
</dbReference>
<dbReference type="HOGENOM" id="CLU_040416_0_0_9"/>
<dbReference type="OrthoDB" id="9807767at2"/>
<dbReference type="Proteomes" id="UP000001572">
    <property type="component" value="Chromosome"/>
</dbReference>
<dbReference type="GO" id="GO:0005737">
    <property type="term" value="C:cytoplasm"/>
    <property type="evidence" value="ECO:0007669"/>
    <property type="project" value="UniProtKB-SubCell"/>
</dbReference>
<dbReference type="GO" id="GO:0036218">
    <property type="term" value="F:dTTP diphosphatase activity"/>
    <property type="evidence" value="ECO:0007669"/>
    <property type="project" value="RHEA"/>
</dbReference>
<dbReference type="GO" id="GO:0036221">
    <property type="term" value="F:UTP diphosphatase activity"/>
    <property type="evidence" value="ECO:0007669"/>
    <property type="project" value="RHEA"/>
</dbReference>
<dbReference type="GO" id="GO:0009117">
    <property type="term" value="P:nucleotide metabolic process"/>
    <property type="evidence" value="ECO:0007669"/>
    <property type="project" value="UniProtKB-KW"/>
</dbReference>
<dbReference type="CDD" id="cd00555">
    <property type="entry name" value="Maf"/>
    <property type="match status" value="1"/>
</dbReference>
<dbReference type="Gene3D" id="3.90.950.10">
    <property type="match status" value="1"/>
</dbReference>
<dbReference type="HAMAP" id="MF_00528">
    <property type="entry name" value="Maf"/>
    <property type="match status" value="1"/>
</dbReference>
<dbReference type="InterPro" id="IPR029001">
    <property type="entry name" value="ITPase-like_fam"/>
</dbReference>
<dbReference type="InterPro" id="IPR003697">
    <property type="entry name" value="Maf-like"/>
</dbReference>
<dbReference type="NCBIfam" id="TIGR00172">
    <property type="entry name" value="maf"/>
    <property type="match status" value="1"/>
</dbReference>
<dbReference type="PANTHER" id="PTHR43213">
    <property type="entry name" value="BIFUNCTIONAL DTTP/UTP PYROPHOSPHATASE/METHYLTRANSFERASE PROTEIN-RELATED"/>
    <property type="match status" value="1"/>
</dbReference>
<dbReference type="PANTHER" id="PTHR43213:SF5">
    <property type="entry name" value="BIFUNCTIONAL DTTP_UTP PYROPHOSPHATASE_METHYLTRANSFERASE PROTEIN-RELATED"/>
    <property type="match status" value="1"/>
</dbReference>
<dbReference type="Pfam" id="PF02545">
    <property type="entry name" value="Maf"/>
    <property type="match status" value="1"/>
</dbReference>
<dbReference type="PIRSF" id="PIRSF006305">
    <property type="entry name" value="Maf"/>
    <property type="match status" value="1"/>
</dbReference>
<dbReference type="SUPFAM" id="SSF52972">
    <property type="entry name" value="ITPase-like"/>
    <property type="match status" value="1"/>
</dbReference>
<organism>
    <name type="scientific">Alkaliphilus metalliredigens (strain QYMF)</name>
    <dbReference type="NCBI Taxonomy" id="293826"/>
    <lineage>
        <taxon>Bacteria</taxon>
        <taxon>Bacillati</taxon>
        <taxon>Bacillota</taxon>
        <taxon>Clostridia</taxon>
        <taxon>Peptostreptococcales</taxon>
        <taxon>Natronincolaceae</taxon>
        <taxon>Alkaliphilus</taxon>
    </lineage>
</organism>
<comment type="function">
    <text evidence="1">Nucleoside triphosphate pyrophosphatase that hydrolyzes dTTP and UTP. May have a dual role in cell division arrest and in preventing the incorporation of modified nucleotides into cellular nucleic acids.</text>
</comment>
<comment type="catalytic activity">
    <reaction evidence="1">
        <text>dTTP + H2O = dTMP + diphosphate + H(+)</text>
        <dbReference type="Rhea" id="RHEA:28534"/>
        <dbReference type="ChEBI" id="CHEBI:15377"/>
        <dbReference type="ChEBI" id="CHEBI:15378"/>
        <dbReference type="ChEBI" id="CHEBI:33019"/>
        <dbReference type="ChEBI" id="CHEBI:37568"/>
        <dbReference type="ChEBI" id="CHEBI:63528"/>
        <dbReference type="EC" id="3.6.1.9"/>
    </reaction>
</comment>
<comment type="catalytic activity">
    <reaction evidence="1">
        <text>UTP + H2O = UMP + diphosphate + H(+)</text>
        <dbReference type="Rhea" id="RHEA:29395"/>
        <dbReference type="ChEBI" id="CHEBI:15377"/>
        <dbReference type="ChEBI" id="CHEBI:15378"/>
        <dbReference type="ChEBI" id="CHEBI:33019"/>
        <dbReference type="ChEBI" id="CHEBI:46398"/>
        <dbReference type="ChEBI" id="CHEBI:57865"/>
        <dbReference type="EC" id="3.6.1.9"/>
    </reaction>
</comment>
<comment type="cofactor">
    <cofactor evidence="1">
        <name>a divalent metal cation</name>
        <dbReference type="ChEBI" id="CHEBI:60240"/>
    </cofactor>
</comment>
<comment type="subcellular location">
    <subcellularLocation>
        <location evidence="1">Cytoplasm</location>
    </subcellularLocation>
</comment>
<comment type="similarity">
    <text evidence="1">Belongs to the Maf family. YhdE subfamily.</text>
</comment>
<proteinExistence type="inferred from homology"/>
<keyword id="KW-0963">Cytoplasm</keyword>
<keyword id="KW-0378">Hydrolase</keyword>
<keyword id="KW-0546">Nucleotide metabolism</keyword>
<keyword id="KW-1185">Reference proteome</keyword>